<gene>
    <name evidence="1" type="primary">secA</name>
    <name type="ordered locus">Ccur92_11020</name>
    <name type="ORF">CCV52592_1859</name>
</gene>
<name>SECA_CAMC5</name>
<keyword id="KW-0067">ATP-binding</keyword>
<keyword id="KW-0997">Cell inner membrane</keyword>
<keyword id="KW-1003">Cell membrane</keyword>
<keyword id="KW-0963">Cytoplasm</keyword>
<keyword id="KW-0472">Membrane</keyword>
<keyword id="KW-0479">Metal-binding</keyword>
<keyword id="KW-0547">Nucleotide-binding</keyword>
<keyword id="KW-0653">Protein transport</keyword>
<keyword id="KW-1185">Reference proteome</keyword>
<keyword id="KW-1278">Translocase</keyword>
<keyword id="KW-0811">Translocation</keyword>
<keyword id="KW-0813">Transport</keyword>
<keyword id="KW-0862">Zinc</keyword>
<reference key="1">
    <citation type="submission" date="2007-07" db="EMBL/GenBank/DDBJ databases">
        <title>Genome sequence of Campylobacter curvus 525.92 isolated from human feces.</title>
        <authorList>
            <person name="Fouts D.E."/>
            <person name="Mongodin E.F."/>
            <person name="Puiu D."/>
            <person name="Sebastian Y."/>
            <person name="Miller W.G."/>
            <person name="Mandrell R.E."/>
            <person name="Lastovica A.J."/>
            <person name="Nelson K.E."/>
        </authorList>
    </citation>
    <scope>NUCLEOTIDE SEQUENCE [LARGE SCALE GENOMIC DNA]</scope>
    <source>
        <strain>525.92</strain>
    </source>
</reference>
<comment type="function">
    <text evidence="1">Part of the Sec protein translocase complex. Interacts with the SecYEG preprotein conducting channel. Has a central role in coupling the hydrolysis of ATP to the transfer of proteins into and across the cell membrane, serving as an ATP-driven molecular motor driving the stepwise translocation of polypeptide chains across the membrane.</text>
</comment>
<comment type="catalytic activity">
    <reaction evidence="1">
        <text>ATP + H2O + cellular proteinSide 1 = ADP + phosphate + cellular proteinSide 2.</text>
        <dbReference type="EC" id="7.4.2.8"/>
    </reaction>
</comment>
<comment type="cofactor">
    <cofactor evidence="1">
        <name>Zn(2+)</name>
        <dbReference type="ChEBI" id="CHEBI:29105"/>
    </cofactor>
    <text evidence="1">May bind 1 zinc ion per subunit.</text>
</comment>
<comment type="subunit">
    <text evidence="1">Monomer and homodimer. Part of the essential Sec protein translocation apparatus which comprises SecA, SecYEG and auxiliary proteins SecDF-YajC and YidC.</text>
</comment>
<comment type="subcellular location">
    <subcellularLocation>
        <location evidence="1">Cell inner membrane</location>
        <topology evidence="1">Peripheral membrane protein</topology>
        <orientation evidence="1">Cytoplasmic side</orientation>
    </subcellularLocation>
    <subcellularLocation>
        <location evidence="1">Cytoplasm</location>
    </subcellularLocation>
    <text evidence="1">Distribution is 50-50.</text>
</comment>
<comment type="similarity">
    <text evidence="1">Belongs to the SecA family.</text>
</comment>
<evidence type="ECO:0000255" key="1">
    <source>
        <dbReference type="HAMAP-Rule" id="MF_01382"/>
    </source>
</evidence>
<evidence type="ECO:0000256" key="2">
    <source>
        <dbReference type="SAM" id="MobiDB-lite"/>
    </source>
</evidence>
<feature type="chain" id="PRO_0000320762" description="Protein translocase subunit SecA">
    <location>
        <begin position="1"/>
        <end position="869"/>
    </location>
</feature>
<feature type="region of interest" description="Disordered" evidence="2">
    <location>
        <begin position="818"/>
        <end position="869"/>
    </location>
</feature>
<feature type="compositionally biased region" description="Basic and acidic residues" evidence="2">
    <location>
        <begin position="818"/>
        <end position="840"/>
    </location>
</feature>
<feature type="binding site" evidence="1">
    <location>
        <position position="88"/>
    </location>
    <ligand>
        <name>ATP</name>
        <dbReference type="ChEBI" id="CHEBI:30616"/>
    </ligand>
</feature>
<feature type="binding site" evidence="1">
    <location>
        <begin position="106"/>
        <end position="110"/>
    </location>
    <ligand>
        <name>ATP</name>
        <dbReference type="ChEBI" id="CHEBI:30616"/>
    </ligand>
</feature>
<feature type="binding site" evidence="1">
    <location>
        <position position="509"/>
    </location>
    <ligand>
        <name>ATP</name>
        <dbReference type="ChEBI" id="CHEBI:30616"/>
    </ligand>
</feature>
<feature type="binding site" evidence="1">
    <location>
        <position position="846"/>
    </location>
    <ligand>
        <name>Zn(2+)</name>
        <dbReference type="ChEBI" id="CHEBI:29105"/>
    </ligand>
</feature>
<feature type="binding site" evidence="1">
    <location>
        <position position="848"/>
    </location>
    <ligand>
        <name>Zn(2+)</name>
        <dbReference type="ChEBI" id="CHEBI:29105"/>
    </ligand>
</feature>
<feature type="binding site" evidence="1">
    <location>
        <position position="857"/>
    </location>
    <ligand>
        <name>Zn(2+)</name>
        <dbReference type="ChEBI" id="CHEBI:29105"/>
    </ligand>
</feature>
<feature type="binding site" evidence="1">
    <location>
        <position position="858"/>
    </location>
    <ligand>
        <name>Zn(2+)</name>
        <dbReference type="ChEBI" id="CHEBI:29105"/>
    </ligand>
</feature>
<organism>
    <name type="scientific">Campylobacter curvus (strain 525.92)</name>
    <dbReference type="NCBI Taxonomy" id="360105"/>
    <lineage>
        <taxon>Bacteria</taxon>
        <taxon>Pseudomonadati</taxon>
        <taxon>Campylobacterota</taxon>
        <taxon>Epsilonproteobacteria</taxon>
        <taxon>Campylobacterales</taxon>
        <taxon>Campylobacteraceae</taxon>
        <taxon>Campylobacter</taxon>
    </lineage>
</organism>
<accession>A7GYW4</accession>
<proteinExistence type="inferred from homology"/>
<protein>
    <recommendedName>
        <fullName evidence="1">Protein translocase subunit SecA</fullName>
        <ecNumber evidence="1">7.4.2.8</ecNumber>
    </recommendedName>
</protein>
<sequence>MVSAIFRKIFGTKNDREIKKYVKRVKFINTLEPKYEAMNDEELKAAFNELRAKVKEGVLGLEEVLNDVFAVVREASKRVLKMRHFDVQLIGGMVLHEGRIAEMKTGEGKTLVATLPVVLNAMSGKGVHVVTVNDYLAKRDATQMGELYNFLGLSVDVVLSGVYDDSVRQAAYNADITYGTNSEFGFDYLRDNMKFDAKDKVQREHNFVIVDEVDSILIDEARTPLIISGPTNRTLDGYIKADEVAQKLTRGEAADPNVPNSKATGDFVVDEKNRTIMITEAGISKAEKLFGVENLYNLENAILSHHLDQALKAHNLFERDVHYVVKNNEVVIVDEFTGRLSEGRRFSEGLHQALEAKEKVKIQEESQTLADTTYQNYFRMYKKLAGMTGTAQTEATEFSQIYKLDVISIPTNVPVMRIDKNDLIYKTQAEKFKAVIDEIKRSHEKGQPVLVGTASIERSEVLHEMLVKAKIPHSVLNAKNHEKEAQIIADAGAKGAVTIATNMAGRGVDIRIDDEVRALGGLYIIGTERHESRRIDNQLRGRAGRQGDPGMSRFYLSLEDNLLRIFGSDRIKAIMDRLGIDEGESIESRMVTRAVENAQKKVESLHFEARKHLLEYDDVANEQRKTIYKYRDELLDKEYDMSEKIAQNRGEYVALLLDQAEIFHGGLKDDYDIKNLCALIFNDCGEEINESELKGLEYDEILAKLTEILAKRYDEKMSVLEPTQKRDIEKVLYLQVLDNAWREHLYQMDILKTGIGLRGYNQKDPLIEYKKESYNLFVELVSRLKSESVKMLQMVRLRSREEQERETAAMLERMQEQQDEGLKFNQREGEDAPAVREKKIPRNSPCPCGSGKKYKDCCGKSGPKKGILA</sequence>
<dbReference type="EC" id="7.4.2.8" evidence="1"/>
<dbReference type="EMBL" id="CP000767">
    <property type="protein sequence ID" value="EAU00304.1"/>
    <property type="molecule type" value="Genomic_DNA"/>
</dbReference>
<dbReference type="RefSeq" id="WP_009651109.1">
    <property type="nucleotide sequence ID" value="NC_009715.2"/>
</dbReference>
<dbReference type="SMR" id="A7GYW4"/>
<dbReference type="STRING" id="360105.CCV52592_1859"/>
<dbReference type="KEGG" id="ccv:CCV52592_1859"/>
<dbReference type="HOGENOM" id="CLU_005314_3_0_7"/>
<dbReference type="OrthoDB" id="9805579at2"/>
<dbReference type="Proteomes" id="UP000006380">
    <property type="component" value="Chromosome"/>
</dbReference>
<dbReference type="GO" id="GO:0031522">
    <property type="term" value="C:cell envelope Sec protein transport complex"/>
    <property type="evidence" value="ECO:0007669"/>
    <property type="project" value="TreeGrafter"/>
</dbReference>
<dbReference type="GO" id="GO:0005829">
    <property type="term" value="C:cytosol"/>
    <property type="evidence" value="ECO:0007669"/>
    <property type="project" value="TreeGrafter"/>
</dbReference>
<dbReference type="GO" id="GO:0005886">
    <property type="term" value="C:plasma membrane"/>
    <property type="evidence" value="ECO:0007669"/>
    <property type="project" value="UniProtKB-SubCell"/>
</dbReference>
<dbReference type="GO" id="GO:0005524">
    <property type="term" value="F:ATP binding"/>
    <property type="evidence" value="ECO:0007669"/>
    <property type="project" value="UniProtKB-UniRule"/>
</dbReference>
<dbReference type="GO" id="GO:0046872">
    <property type="term" value="F:metal ion binding"/>
    <property type="evidence" value="ECO:0007669"/>
    <property type="project" value="UniProtKB-KW"/>
</dbReference>
<dbReference type="GO" id="GO:0008564">
    <property type="term" value="F:protein-exporting ATPase activity"/>
    <property type="evidence" value="ECO:0007669"/>
    <property type="project" value="UniProtKB-EC"/>
</dbReference>
<dbReference type="GO" id="GO:0065002">
    <property type="term" value="P:intracellular protein transmembrane transport"/>
    <property type="evidence" value="ECO:0007669"/>
    <property type="project" value="UniProtKB-UniRule"/>
</dbReference>
<dbReference type="GO" id="GO:0017038">
    <property type="term" value="P:protein import"/>
    <property type="evidence" value="ECO:0007669"/>
    <property type="project" value="InterPro"/>
</dbReference>
<dbReference type="GO" id="GO:0006605">
    <property type="term" value="P:protein targeting"/>
    <property type="evidence" value="ECO:0007669"/>
    <property type="project" value="UniProtKB-UniRule"/>
</dbReference>
<dbReference type="GO" id="GO:0043952">
    <property type="term" value="P:protein transport by the Sec complex"/>
    <property type="evidence" value="ECO:0007669"/>
    <property type="project" value="TreeGrafter"/>
</dbReference>
<dbReference type="CDD" id="cd17928">
    <property type="entry name" value="DEXDc_SecA"/>
    <property type="match status" value="1"/>
</dbReference>
<dbReference type="CDD" id="cd18803">
    <property type="entry name" value="SF2_C_secA"/>
    <property type="match status" value="1"/>
</dbReference>
<dbReference type="FunFam" id="3.40.50.300:FF:000429">
    <property type="entry name" value="Preprotein translocase subunit SecA"/>
    <property type="match status" value="1"/>
</dbReference>
<dbReference type="FunFam" id="3.90.1440.10:FF:000002">
    <property type="entry name" value="Protein translocase subunit SecA"/>
    <property type="match status" value="1"/>
</dbReference>
<dbReference type="Gene3D" id="1.10.3060.10">
    <property type="entry name" value="Helical scaffold and wing domains of SecA"/>
    <property type="match status" value="1"/>
</dbReference>
<dbReference type="Gene3D" id="3.40.50.300">
    <property type="entry name" value="P-loop containing nucleotide triphosphate hydrolases"/>
    <property type="match status" value="3"/>
</dbReference>
<dbReference type="Gene3D" id="3.90.1440.10">
    <property type="entry name" value="SecA, preprotein cross-linking domain"/>
    <property type="match status" value="1"/>
</dbReference>
<dbReference type="HAMAP" id="MF_01382">
    <property type="entry name" value="SecA"/>
    <property type="match status" value="1"/>
</dbReference>
<dbReference type="InterPro" id="IPR014001">
    <property type="entry name" value="Helicase_ATP-bd"/>
</dbReference>
<dbReference type="InterPro" id="IPR001650">
    <property type="entry name" value="Helicase_C-like"/>
</dbReference>
<dbReference type="InterPro" id="IPR027417">
    <property type="entry name" value="P-loop_NTPase"/>
</dbReference>
<dbReference type="InterPro" id="IPR004027">
    <property type="entry name" value="SEC_C_motif"/>
</dbReference>
<dbReference type="InterPro" id="IPR000185">
    <property type="entry name" value="SecA"/>
</dbReference>
<dbReference type="InterPro" id="IPR011115">
    <property type="entry name" value="SecA_DEAD"/>
</dbReference>
<dbReference type="InterPro" id="IPR014018">
    <property type="entry name" value="SecA_motor_DEAD"/>
</dbReference>
<dbReference type="InterPro" id="IPR011130">
    <property type="entry name" value="SecA_preprotein_X-link_dom"/>
</dbReference>
<dbReference type="InterPro" id="IPR044722">
    <property type="entry name" value="SecA_SF2_C"/>
</dbReference>
<dbReference type="InterPro" id="IPR011116">
    <property type="entry name" value="SecA_Wing/Scaffold"/>
</dbReference>
<dbReference type="InterPro" id="IPR036266">
    <property type="entry name" value="SecA_Wing/Scaffold_sf"/>
</dbReference>
<dbReference type="InterPro" id="IPR036670">
    <property type="entry name" value="SecA_X-link_sf"/>
</dbReference>
<dbReference type="NCBIfam" id="NF006630">
    <property type="entry name" value="PRK09200.1"/>
    <property type="match status" value="1"/>
</dbReference>
<dbReference type="NCBIfam" id="NF009538">
    <property type="entry name" value="PRK12904.1"/>
    <property type="match status" value="1"/>
</dbReference>
<dbReference type="NCBIfam" id="TIGR00963">
    <property type="entry name" value="secA"/>
    <property type="match status" value="1"/>
</dbReference>
<dbReference type="PANTHER" id="PTHR30612:SF0">
    <property type="entry name" value="CHLOROPLAST PROTEIN-TRANSPORTING ATPASE"/>
    <property type="match status" value="1"/>
</dbReference>
<dbReference type="PANTHER" id="PTHR30612">
    <property type="entry name" value="SECA INNER MEMBRANE COMPONENT OF SEC PROTEIN SECRETION SYSTEM"/>
    <property type="match status" value="1"/>
</dbReference>
<dbReference type="Pfam" id="PF21090">
    <property type="entry name" value="P-loop_SecA"/>
    <property type="match status" value="1"/>
</dbReference>
<dbReference type="Pfam" id="PF02810">
    <property type="entry name" value="SEC-C"/>
    <property type="match status" value="1"/>
</dbReference>
<dbReference type="Pfam" id="PF07517">
    <property type="entry name" value="SecA_DEAD"/>
    <property type="match status" value="1"/>
</dbReference>
<dbReference type="Pfam" id="PF01043">
    <property type="entry name" value="SecA_PP_bind"/>
    <property type="match status" value="1"/>
</dbReference>
<dbReference type="Pfam" id="PF07516">
    <property type="entry name" value="SecA_SW"/>
    <property type="match status" value="1"/>
</dbReference>
<dbReference type="PRINTS" id="PR00906">
    <property type="entry name" value="SECA"/>
</dbReference>
<dbReference type="SMART" id="SM00957">
    <property type="entry name" value="SecA_DEAD"/>
    <property type="match status" value="1"/>
</dbReference>
<dbReference type="SMART" id="SM00958">
    <property type="entry name" value="SecA_PP_bind"/>
    <property type="match status" value="1"/>
</dbReference>
<dbReference type="SUPFAM" id="SSF81886">
    <property type="entry name" value="Helical scaffold and wing domains of SecA"/>
    <property type="match status" value="1"/>
</dbReference>
<dbReference type="SUPFAM" id="SSF52540">
    <property type="entry name" value="P-loop containing nucleoside triphosphate hydrolases"/>
    <property type="match status" value="2"/>
</dbReference>
<dbReference type="SUPFAM" id="SSF81767">
    <property type="entry name" value="Pre-protein crosslinking domain of SecA"/>
    <property type="match status" value="1"/>
</dbReference>
<dbReference type="PROSITE" id="PS51196">
    <property type="entry name" value="SECA_MOTOR_DEAD"/>
    <property type="match status" value="1"/>
</dbReference>